<feature type="chain" id="PRO_1000063287" description="ATP phosphoribosyltransferase">
    <location>
        <begin position="1"/>
        <end position="217"/>
    </location>
</feature>
<dbReference type="EC" id="2.4.2.17" evidence="1"/>
<dbReference type="EMBL" id="AM421808">
    <property type="protein sequence ID" value="CAM10702.1"/>
    <property type="molecule type" value="Genomic_DNA"/>
</dbReference>
<dbReference type="RefSeq" id="WP_002261539.1">
    <property type="nucleotide sequence ID" value="NC_008767.1"/>
</dbReference>
<dbReference type="SMR" id="A1KV03"/>
<dbReference type="GeneID" id="93387808"/>
<dbReference type="KEGG" id="nmc:NMC1499"/>
<dbReference type="HOGENOM" id="CLU_038115_2_0_4"/>
<dbReference type="UniPathway" id="UPA00031">
    <property type="reaction ID" value="UER00006"/>
</dbReference>
<dbReference type="Proteomes" id="UP000002286">
    <property type="component" value="Chromosome"/>
</dbReference>
<dbReference type="GO" id="GO:0005737">
    <property type="term" value="C:cytoplasm"/>
    <property type="evidence" value="ECO:0007669"/>
    <property type="project" value="UniProtKB-SubCell"/>
</dbReference>
<dbReference type="GO" id="GO:0005524">
    <property type="term" value="F:ATP binding"/>
    <property type="evidence" value="ECO:0007669"/>
    <property type="project" value="UniProtKB-KW"/>
</dbReference>
<dbReference type="GO" id="GO:0003879">
    <property type="term" value="F:ATP phosphoribosyltransferase activity"/>
    <property type="evidence" value="ECO:0007669"/>
    <property type="project" value="UniProtKB-UniRule"/>
</dbReference>
<dbReference type="GO" id="GO:0000105">
    <property type="term" value="P:L-histidine biosynthetic process"/>
    <property type="evidence" value="ECO:0007669"/>
    <property type="project" value="UniProtKB-UniRule"/>
</dbReference>
<dbReference type="CDD" id="cd13595">
    <property type="entry name" value="PBP2_HisGs"/>
    <property type="match status" value="1"/>
</dbReference>
<dbReference type="FunFam" id="3.40.190.10:FF:000011">
    <property type="entry name" value="ATP phosphoribosyltransferase"/>
    <property type="match status" value="1"/>
</dbReference>
<dbReference type="Gene3D" id="3.40.190.10">
    <property type="entry name" value="Periplasmic binding protein-like II"/>
    <property type="match status" value="2"/>
</dbReference>
<dbReference type="HAMAP" id="MF_01018">
    <property type="entry name" value="HisG_Short"/>
    <property type="match status" value="1"/>
</dbReference>
<dbReference type="InterPro" id="IPR013820">
    <property type="entry name" value="ATP_PRibTrfase_cat"/>
</dbReference>
<dbReference type="InterPro" id="IPR018198">
    <property type="entry name" value="ATP_PRibTrfase_CS"/>
</dbReference>
<dbReference type="InterPro" id="IPR001348">
    <property type="entry name" value="ATP_PRibTrfase_HisG"/>
</dbReference>
<dbReference type="InterPro" id="IPR024893">
    <property type="entry name" value="ATP_PRibTrfase_HisG_short"/>
</dbReference>
<dbReference type="NCBIfam" id="TIGR00070">
    <property type="entry name" value="hisG"/>
    <property type="match status" value="1"/>
</dbReference>
<dbReference type="PANTHER" id="PTHR21403:SF8">
    <property type="entry name" value="ATP PHOSPHORIBOSYLTRANSFERASE"/>
    <property type="match status" value="1"/>
</dbReference>
<dbReference type="PANTHER" id="PTHR21403">
    <property type="entry name" value="ATP PHOSPHORIBOSYLTRANSFERASE ATP-PRTASE"/>
    <property type="match status" value="1"/>
</dbReference>
<dbReference type="Pfam" id="PF01634">
    <property type="entry name" value="HisG"/>
    <property type="match status" value="1"/>
</dbReference>
<dbReference type="SUPFAM" id="SSF53850">
    <property type="entry name" value="Periplasmic binding protein-like II"/>
    <property type="match status" value="1"/>
</dbReference>
<dbReference type="PROSITE" id="PS01316">
    <property type="entry name" value="ATP_P_PHORIBOSYLTR"/>
    <property type="match status" value="1"/>
</dbReference>
<evidence type="ECO:0000255" key="1">
    <source>
        <dbReference type="HAMAP-Rule" id="MF_01018"/>
    </source>
</evidence>
<name>HIS1_NEIMF</name>
<protein>
    <recommendedName>
        <fullName evidence="1">ATP phosphoribosyltransferase</fullName>
        <shortName evidence="1">ATP-PRT</shortName>
        <shortName evidence="1">ATP-PRTase</shortName>
        <ecNumber evidence="1">2.4.2.17</ecNumber>
    </recommendedName>
</protein>
<sequence>MQDNALTIALSKGRIFEETLPLLAAAGIVPTEEPEKSRKLIIGTNHENIRLVIVRATDVPTYVRYGAADFGIAGKDVLIEHGGTGLYRPLDLEIAKCRMMVAVRKGFDYEAASQPGCRLKIATKYPEIAASHFAGKGVHVDIIKLYGSMELAPLVGLSDAIVDLVSTGNTLKANGLEAVEHIVDISSRLVVNKAALKTKYALLEPIIQAFGGAVKAK</sequence>
<organism>
    <name type="scientific">Neisseria meningitidis serogroup C / serotype 2a (strain ATCC 700532 / DSM 15464 / FAM18)</name>
    <dbReference type="NCBI Taxonomy" id="272831"/>
    <lineage>
        <taxon>Bacteria</taxon>
        <taxon>Pseudomonadati</taxon>
        <taxon>Pseudomonadota</taxon>
        <taxon>Betaproteobacteria</taxon>
        <taxon>Neisseriales</taxon>
        <taxon>Neisseriaceae</taxon>
        <taxon>Neisseria</taxon>
    </lineage>
</organism>
<gene>
    <name evidence="1" type="primary">hisG</name>
    <name type="ordered locus">NMC1499</name>
</gene>
<keyword id="KW-0028">Amino-acid biosynthesis</keyword>
<keyword id="KW-0067">ATP-binding</keyword>
<keyword id="KW-0963">Cytoplasm</keyword>
<keyword id="KW-0328">Glycosyltransferase</keyword>
<keyword id="KW-0368">Histidine biosynthesis</keyword>
<keyword id="KW-0547">Nucleotide-binding</keyword>
<keyword id="KW-0808">Transferase</keyword>
<accession>A1KV03</accession>
<reference key="1">
    <citation type="journal article" date="2007" name="PLoS Genet.">
        <title>Meningococcal genetic variation mechanisms viewed through comparative analysis of serogroup C strain FAM18.</title>
        <authorList>
            <person name="Bentley S.D."/>
            <person name="Vernikos G.S."/>
            <person name="Snyder L.A.S."/>
            <person name="Churcher C."/>
            <person name="Arrowsmith C."/>
            <person name="Chillingworth T."/>
            <person name="Cronin A."/>
            <person name="Davis P.H."/>
            <person name="Holroyd N.E."/>
            <person name="Jagels K."/>
            <person name="Maddison M."/>
            <person name="Moule S."/>
            <person name="Rabbinowitsch E."/>
            <person name="Sharp S."/>
            <person name="Unwin L."/>
            <person name="Whitehead S."/>
            <person name="Quail M.A."/>
            <person name="Achtman M."/>
            <person name="Barrell B.G."/>
            <person name="Saunders N.J."/>
            <person name="Parkhill J."/>
        </authorList>
    </citation>
    <scope>NUCLEOTIDE SEQUENCE [LARGE SCALE GENOMIC DNA]</scope>
    <source>
        <strain>ATCC 700532 / DSM 15464 / FAM18</strain>
    </source>
</reference>
<comment type="function">
    <text evidence="1">Catalyzes the condensation of ATP and 5-phosphoribose 1-diphosphate to form N'-(5'-phosphoribosyl)-ATP (PR-ATP). Has a crucial role in the pathway because the rate of histidine biosynthesis seems to be controlled primarily by regulation of HisG enzymatic activity.</text>
</comment>
<comment type="catalytic activity">
    <reaction evidence="1">
        <text>1-(5-phospho-beta-D-ribosyl)-ATP + diphosphate = 5-phospho-alpha-D-ribose 1-diphosphate + ATP</text>
        <dbReference type="Rhea" id="RHEA:18473"/>
        <dbReference type="ChEBI" id="CHEBI:30616"/>
        <dbReference type="ChEBI" id="CHEBI:33019"/>
        <dbReference type="ChEBI" id="CHEBI:58017"/>
        <dbReference type="ChEBI" id="CHEBI:73183"/>
        <dbReference type="EC" id="2.4.2.17"/>
    </reaction>
</comment>
<comment type="pathway">
    <text evidence="1">Amino-acid biosynthesis; L-histidine biosynthesis; L-histidine from 5-phospho-alpha-D-ribose 1-diphosphate: step 1/9.</text>
</comment>
<comment type="subunit">
    <text evidence="1">Heteromultimer composed of HisG and HisZ subunits.</text>
</comment>
<comment type="subcellular location">
    <subcellularLocation>
        <location evidence="1">Cytoplasm</location>
    </subcellularLocation>
</comment>
<comment type="domain">
    <text>Lacks the C-terminal regulatory region which is replaced by HisZ.</text>
</comment>
<comment type="similarity">
    <text evidence="1">Belongs to the ATP phosphoribosyltransferase family. Short subfamily.</text>
</comment>
<proteinExistence type="inferred from homology"/>